<protein>
    <recommendedName>
        <fullName evidence="1">Ribosome maturation factor RimM</fullName>
    </recommendedName>
</protein>
<comment type="function">
    <text evidence="1">An accessory protein needed during the final step in the assembly of 30S ribosomal subunit, possibly for assembly of the head region. Essential for efficient processing of 16S rRNA. May be needed both before and after RbfA during the maturation of 16S rRNA. It has affinity for free ribosomal 30S subunits but not for 70S ribosomes.</text>
</comment>
<comment type="subunit">
    <text evidence="1">Binds ribosomal protein uS19.</text>
</comment>
<comment type="subcellular location">
    <subcellularLocation>
        <location evidence="1">Cytoplasm</location>
    </subcellularLocation>
</comment>
<comment type="domain">
    <text evidence="1">The PRC barrel domain binds ribosomal protein uS19.</text>
</comment>
<comment type="similarity">
    <text evidence="1">Belongs to the RimM family.</text>
</comment>
<dbReference type="EMBL" id="AE016823">
    <property type="protein sequence ID" value="AAS70153.1"/>
    <property type="molecule type" value="Genomic_DNA"/>
</dbReference>
<dbReference type="RefSeq" id="WP_000159892.1">
    <property type="nucleotide sequence ID" value="NC_005823.1"/>
</dbReference>
<dbReference type="SMR" id="Q72S29"/>
<dbReference type="GeneID" id="61144856"/>
<dbReference type="KEGG" id="lic:LIC_11557"/>
<dbReference type="HOGENOM" id="CLU_077636_1_0_12"/>
<dbReference type="Proteomes" id="UP000007037">
    <property type="component" value="Chromosome I"/>
</dbReference>
<dbReference type="GO" id="GO:0005737">
    <property type="term" value="C:cytoplasm"/>
    <property type="evidence" value="ECO:0007669"/>
    <property type="project" value="UniProtKB-SubCell"/>
</dbReference>
<dbReference type="GO" id="GO:0005840">
    <property type="term" value="C:ribosome"/>
    <property type="evidence" value="ECO:0007669"/>
    <property type="project" value="InterPro"/>
</dbReference>
<dbReference type="GO" id="GO:0043022">
    <property type="term" value="F:ribosome binding"/>
    <property type="evidence" value="ECO:0007669"/>
    <property type="project" value="InterPro"/>
</dbReference>
<dbReference type="GO" id="GO:0042274">
    <property type="term" value="P:ribosomal small subunit biogenesis"/>
    <property type="evidence" value="ECO:0007669"/>
    <property type="project" value="UniProtKB-UniRule"/>
</dbReference>
<dbReference type="GO" id="GO:0006364">
    <property type="term" value="P:rRNA processing"/>
    <property type="evidence" value="ECO:0007669"/>
    <property type="project" value="UniProtKB-UniRule"/>
</dbReference>
<dbReference type="Gene3D" id="2.30.30.240">
    <property type="entry name" value="PRC-barrel domain"/>
    <property type="match status" value="1"/>
</dbReference>
<dbReference type="Gene3D" id="2.40.30.60">
    <property type="entry name" value="RimM"/>
    <property type="match status" value="1"/>
</dbReference>
<dbReference type="HAMAP" id="MF_00014">
    <property type="entry name" value="Ribosome_mat_RimM"/>
    <property type="match status" value="1"/>
</dbReference>
<dbReference type="InterPro" id="IPR011033">
    <property type="entry name" value="PRC_barrel-like_sf"/>
</dbReference>
<dbReference type="InterPro" id="IPR056792">
    <property type="entry name" value="PRC_RimM"/>
</dbReference>
<dbReference type="InterPro" id="IPR011961">
    <property type="entry name" value="RimM"/>
</dbReference>
<dbReference type="InterPro" id="IPR002676">
    <property type="entry name" value="RimM_N"/>
</dbReference>
<dbReference type="InterPro" id="IPR036976">
    <property type="entry name" value="RimM_N_sf"/>
</dbReference>
<dbReference type="InterPro" id="IPR009000">
    <property type="entry name" value="Transl_B-barrel_sf"/>
</dbReference>
<dbReference type="NCBIfam" id="TIGR02273">
    <property type="entry name" value="16S_RimM"/>
    <property type="match status" value="1"/>
</dbReference>
<dbReference type="NCBIfam" id="NF011184">
    <property type="entry name" value="PRK14590.1"/>
    <property type="match status" value="1"/>
</dbReference>
<dbReference type="PANTHER" id="PTHR33692">
    <property type="entry name" value="RIBOSOME MATURATION FACTOR RIMM"/>
    <property type="match status" value="1"/>
</dbReference>
<dbReference type="PANTHER" id="PTHR33692:SF1">
    <property type="entry name" value="RIBOSOME MATURATION FACTOR RIMM"/>
    <property type="match status" value="1"/>
</dbReference>
<dbReference type="Pfam" id="PF24986">
    <property type="entry name" value="PRC_RimM"/>
    <property type="match status" value="1"/>
</dbReference>
<dbReference type="Pfam" id="PF01782">
    <property type="entry name" value="RimM"/>
    <property type="match status" value="1"/>
</dbReference>
<dbReference type="SUPFAM" id="SSF50346">
    <property type="entry name" value="PRC-barrel domain"/>
    <property type="match status" value="1"/>
</dbReference>
<dbReference type="SUPFAM" id="SSF50447">
    <property type="entry name" value="Translation proteins"/>
    <property type="match status" value="1"/>
</dbReference>
<sequence length="176" mass="20201">MTKEWISLGQLGKPFGIKGWLRLNVRETVLCELKTPISLKLSKPDFHFPEKEITLLEIRPHGGKFIVRFEGVTTPEEAAKWIGGFLFLPQKLLPKIETKNEFYITDLIGLQAIDESGKKLDWKLKDVQDNPAHPILVFVKENGEEILIPFLQVFVGDLDLEKNTIVLIQPEIWNEI</sequence>
<accession>Q72S29</accession>
<keyword id="KW-0143">Chaperone</keyword>
<keyword id="KW-0963">Cytoplasm</keyword>
<keyword id="KW-0690">Ribosome biogenesis</keyword>
<keyword id="KW-0698">rRNA processing</keyword>
<gene>
    <name evidence="1" type="primary">rimM</name>
    <name type="ordered locus">LIC_11557</name>
</gene>
<proteinExistence type="inferred from homology"/>
<organism>
    <name type="scientific">Leptospira interrogans serogroup Icterohaemorrhagiae serovar copenhageni (strain Fiocruz L1-130)</name>
    <dbReference type="NCBI Taxonomy" id="267671"/>
    <lineage>
        <taxon>Bacteria</taxon>
        <taxon>Pseudomonadati</taxon>
        <taxon>Spirochaetota</taxon>
        <taxon>Spirochaetia</taxon>
        <taxon>Leptospirales</taxon>
        <taxon>Leptospiraceae</taxon>
        <taxon>Leptospira</taxon>
    </lineage>
</organism>
<reference key="1">
    <citation type="journal article" date="2004" name="J. Bacteriol.">
        <title>Comparative genomics of two Leptospira interrogans serovars reveals novel insights into physiology and pathogenesis.</title>
        <authorList>
            <person name="Nascimento A.L.T.O."/>
            <person name="Ko A.I."/>
            <person name="Martins E.A.L."/>
            <person name="Monteiro-Vitorello C.B."/>
            <person name="Ho P.L."/>
            <person name="Haake D.A."/>
            <person name="Verjovski-Almeida S."/>
            <person name="Hartskeerl R.A."/>
            <person name="Marques M.V."/>
            <person name="Oliveira M.C."/>
            <person name="Menck C.F.M."/>
            <person name="Leite L.C.C."/>
            <person name="Carrer H."/>
            <person name="Coutinho L.L."/>
            <person name="Degrave W.M."/>
            <person name="Dellagostin O.A."/>
            <person name="El-Dorry H."/>
            <person name="Ferro E.S."/>
            <person name="Ferro M.I.T."/>
            <person name="Furlan L.R."/>
            <person name="Gamberini M."/>
            <person name="Giglioti E.A."/>
            <person name="Goes-Neto A."/>
            <person name="Goldman G.H."/>
            <person name="Goldman M.H.S."/>
            <person name="Harakava R."/>
            <person name="Jeronimo S.M.B."/>
            <person name="Junqueira-de-Azevedo I.L.M."/>
            <person name="Kimura E.T."/>
            <person name="Kuramae E.E."/>
            <person name="Lemos E.G.M."/>
            <person name="Lemos M.V.F."/>
            <person name="Marino C.L."/>
            <person name="Nunes L.R."/>
            <person name="de Oliveira R.C."/>
            <person name="Pereira G.G."/>
            <person name="Reis M.S."/>
            <person name="Schriefer A."/>
            <person name="Siqueira W.J."/>
            <person name="Sommer P."/>
            <person name="Tsai S.M."/>
            <person name="Simpson A.J.G."/>
            <person name="Ferro J.A."/>
            <person name="Camargo L.E.A."/>
            <person name="Kitajima J.P."/>
            <person name="Setubal J.C."/>
            <person name="Van Sluys M.A."/>
        </authorList>
    </citation>
    <scope>NUCLEOTIDE SEQUENCE [LARGE SCALE GENOMIC DNA]</scope>
    <source>
        <strain>Fiocruz L1-130</strain>
    </source>
</reference>
<name>RIMM_LEPIC</name>
<feature type="chain" id="PRO_0000163310" description="Ribosome maturation factor RimM">
    <location>
        <begin position="1"/>
        <end position="176"/>
    </location>
</feature>
<feature type="domain" description="PRC barrel" evidence="1">
    <location>
        <begin position="99"/>
        <end position="174"/>
    </location>
</feature>
<evidence type="ECO:0000255" key="1">
    <source>
        <dbReference type="HAMAP-Rule" id="MF_00014"/>
    </source>
</evidence>